<protein>
    <recommendedName>
        <fullName>Heat shock protein 70 homolog</fullName>
    </recommendedName>
</protein>
<sequence length="941" mass="107204">MDNKLNHNDDNTLIQTEDVIGIDLGTRFSCVSIWRNKRFEIIPDQFGNRTIPSVVSFYKSAKLVGHNALCMKDANPKNTIYDIKRIIGRRMNDKSIEQTKNLISYELVSDESKHENILVQLDKSDYTLTHKYQYKPEEICAQILIEIRRIASQYLQKPINKAVITVPAYFNDAQRQATLDSAKIAGLDVLKIINEPTAAALAYGLGSEKWNKKTGGNVIVYDLGAGTLDVSLMNISNGVFRTLAVGGNTHLGGEDFDYLIMNHILIDFRKKHRIKELQMSKLSQLKLKNSVENAKKLLSTVDKAVVCVDDFYNGKQLYFNLTREFMEMVCNELFIMCMKPLKDVLDSSGLTRQDIDKVILVGGSTRIPKIQKLILDFFKNTQINALTMSLNPDEVVSAGASIYGYIITNKGDPFSDNLVLLDITPLSLGVETLQKQMTVIIPRNTVIPTKKTKIFSTDTDDQDNVNIKIFEGERKLTKNNFHVGTFNLSGFEKGPRGYPVIKITFHIDINGILQVTAHEKKSDIQNGIKITSTWGAKGRLSKSDIETIIKEAEQNEEIDKLYSHKIGLVHRINSVCNAITINLKDNEITLTNADKKKIKADIKSNLKWLQNKDINDLEVTELEKRENRLNKLYAPLIIQIGKKSDFKDYNKDTTTAEIHGDDNENDGGIYERIVLESDPSDYEKEEIKALTATIQDLCKNIINVVNNPISKFSREDIDLVTDYMETIQIWTYTTTATSTIEFIAKINEINKFTEDIMKKYEDTKIFEKNDSFTYKDELQLTCLTLNECIKSNYFSVKKSEIDILSKTIKDTMFWLLGHQNEDNSVYKEKLDQVISICNSVYHGMHRIKELENQPDIPEDSEDSESEDDTTTSKDSESSEITENLALPTNKIRENTSELLKRLPDKIKSSTQNKNDVLLKIDLNKLNPNTDIKYKNIDNHYR</sequence>
<proteinExistence type="inferred from homology"/>
<dbReference type="EMBL" id="AY653733">
    <property type="protein sequence ID" value="AAV50526.1"/>
    <property type="molecule type" value="Genomic_DNA"/>
</dbReference>
<dbReference type="SMR" id="Q5UPU0"/>
<dbReference type="KEGG" id="vg:9924863"/>
<dbReference type="OrthoDB" id="5915at10239"/>
<dbReference type="Proteomes" id="UP000001134">
    <property type="component" value="Genome"/>
</dbReference>
<dbReference type="GO" id="GO:0005524">
    <property type="term" value="F:ATP binding"/>
    <property type="evidence" value="ECO:0007669"/>
    <property type="project" value="UniProtKB-KW"/>
</dbReference>
<dbReference type="GO" id="GO:0140662">
    <property type="term" value="F:ATP-dependent protein folding chaperone"/>
    <property type="evidence" value="ECO:0007669"/>
    <property type="project" value="InterPro"/>
</dbReference>
<dbReference type="CDD" id="cd24028">
    <property type="entry name" value="ASKHA_NBD_HSP70_HSPA1-like"/>
    <property type="match status" value="1"/>
</dbReference>
<dbReference type="FunFam" id="2.60.34.10:FF:000012">
    <property type="entry name" value="Heat shock 70 kDa protein"/>
    <property type="match status" value="1"/>
</dbReference>
<dbReference type="FunFam" id="3.90.640.10:FF:000003">
    <property type="entry name" value="Molecular chaperone DnaK"/>
    <property type="match status" value="1"/>
</dbReference>
<dbReference type="Gene3D" id="1.20.1270.10">
    <property type="match status" value="1"/>
</dbReference>
<dbReference type="Gene3D" id="3.30.30.30">
    <property type="match status" value="1"/>
</dbReference>
<dbReference type="Gene3D" id="3.30.420.40">
    <property type="match status" value="2"/>
</dbReference>
<dbReference type="Gene3D" id="3.90.640.10">
    <property type="entry name" value="Actin, Chain A, domain 4"/>
    <property type="match status" value="1"/>
</dbReference>
<dbReference type="Gene3D" id="2.60.34.10">
    <property type="entry name" value="Substrate Binding Domain Of DNAk, Chain A, domain 1"/>
    <property type="match status" value="1"/>
</dbReference>
<dbReference type="InterPro" id="IPR043129">
    <property type="entry name" value="ATPase_NBD"/>
</dbReference>
<dbReference type="InterPro" id="IPR018181">
    <property type="entry name" value="Heat_shock_70_CS"/>
</dbReference>
<dbReference type="InterPro" id="IPR029048">
    <property type="entry name" value="HSP70_C_sf"/>
</dbReference>
<dbReference type="InterPro" id="IPR029047">
    <property type="entry name" value="HSP70_peptide-bd_sf"/>
</dbReference>
<dbReference type="InterPro" id="IPR013126">
    <property type="entry name" value="Hsp_70_fam"/>
</dbReference>
<dbReference type="PANTHER" id="PTHR19375">
    <property type="entry name" value="HEAT SHOCK PROTEIN 70KDA"/>
    <property type="match status" value="1"/>
</dbReference>
<dbReference type="Pfam" id="PF00012">
    <property type="entry name" value="HSP70"/>
    <property type="match status" value="1"/>
</dbReference>
<dbReference type="PRINTS" id="PR00301">
    <property type="entry name" value="HEATSHOCK70"/>
</dbReference>
<dbReference type="SUPFAM" id="SSF53067">
    <property type="entry name" value="Actin-like ATPase domain"/>
    <property type="match status" value="2"/>
</dbReference>
<dbReference type="SUPFAM" id="SSF100920">
    <property type="entry name" value="Heat shock protein 70kD (HSP70), peptide-binding domain"/>
    <property type="match status" value="1"/>
</dbReference>
<dbReference type="PROSITE" id="PS01036">
    <property type="entry name" value="HSP70_3"/>
    <property type="match status" value="1"/>
</dbReference>
<organismHost>
    <name type="scientific">Acanthamoeba polyphaga</name>
    <name type="common">Amoeba</name>
    <dbReference type="NCBI Taxonomy" id="5757"/>
</organismHost>
<name>HSP7L_MIMIV</name>
<gene>
    <name type="ordered locus">MIMI_L254</name>
</gene>
<feature type="chain" id="PRO_0000078672" description="Heat shock protein 70 homolog">
    <location>
        <begin position="1"/>
        <end position="941"/>
    </location>
</feature>
<feature type="region of interest" description="Disordered" evidence="1">
    <location>
        <begin position="851"/>
        <end position="887"/>
    </location>
</feature>
<feature type="compositionally biased region" description="Acidic residues" evidence="1">
    <location>
        <begin position="856"/>
        <end position="869"/>
    </location>
</feature>
<comment type="function">
    <text>Probable chaperone.</text>
</comment>
<comment type="similarity">
    <text evidence="2">Belongs to the heat shock protein 70 family.</text>
</comment>
<evidence type="ECO:0000256" key="1">
    <source>
        <dbReference type="SAM" id="MobiDB-lite"/>
    </source>
</evidence>
<evidence type="ECO:0000305" key="2"/>
<organism>
    <name type="scientific">Acanthamoeba polyphaga mimivirus</name>
    <name type="common">APMV</name>
    <dbReference type="NCBI Taxonomy" id="212035"/>
    <lineage>
        <taxon>Viruses</taxon>
        <taxon>Varidnaviria</taxon>
        <taxon>Bamfordvirae</taxon>
        <taxon>Nucleocytoviricota</taxon>
        <taxon>Megaviricetes</taxon>
        <taxon>Imitervirales</taxon>
        <taxon>Mimiviridae</taxon>
        <taxon>Megamimivirinae</taxon>
        <taxon>Mimivirus</taxon>
        <taxon>Mimivirus bradfordmassiliense</taxon>
    </lineage>
</organism>
<accession>Q5UPU0</accession>
<keyword id="KW-0067">ATP-binding</keyword>
<keyword id="KW-0143">Chaperone</keyword>
<keyword id="KW-0547">Nucleotide-binding</keyword>
<keyword id="KW-1185">Reference proteome</keyword>
<reference key="1">
    <citation type="journal article" date="2004" name="Science">
        <title>The 1.2-megabase genome sequence of Mimivirus.</title>
        <authorList>
            <person name="Raoult D."/>
            <person name="Audic S."/>
            <person name="Robert C."/>
            <person name="Abergel C."/>
            <person name="Renesto P."/>
            <person name="Ogata H."/>
            <person name="La Scola B."/>
            <person name="Susan M."/>
            <person name="Claverie J.-M."/>
        </authorList>
    </citation>
    <scope>NUCLEOTIDE SEQUENCE [LARGE SCALE GENOMIC DNA]</scope>
    <source>
        <strain>Rowbotham-Bradford</strain>
    </source>
</reference>